<name>YAE1_COCIM</name>
<accession>Q1DQS5</accession>
<accession>J3K3X7</accession>
<sequence>MAPSSVDSASLCSDIPNSAPPSPSTALSSPARSSPPPQHPPPAESTGLDDIFGSSPPPTAGLSAEPPHTASSSHCEPSDLPSLRRQHVTAGYRDGISAAKHEHVQRGFDAGFPVGAQLGMRVGVVLGVLEGLVRCSPSASSSAPGKRSESGTTAAPSLDILQLYDLAKSELAVQKVFGGVAEIDSEVKPEQDSRLKLEKAGEEVVSKWEETVMRLLGNRS</sequence>
<dbReference type="EMBL" id="GG704912">
    <property type="protein sequence ID" value="EAS31859.3"/>
    <property type="molecule type" value="Genomic_DNA"/>
</dbReference>
<dbReference type="RefSeq" id="XP_001243442.1">
    <property type="nucleotide sequence ID" value="XM_001243441.2"/>
</dbReference>
<dbReference type="STRING" id="246410.Q1DQS5"/>
<dbReference type="GeneID" id="4562422"/>
<dbReference type="KEGG" id="cim:CIMG_07338"/>
<dbReference type="VEuPathDB" id="FungiDB:CIMG_07338"/>
<dbReference type="InParanoid" id="Q1DQS5"/>
<dbReference type="OMA" id="AHVQEGF"/>
<dbReference type="OrthoDB" id="20086at2759"/>
<dbReference type="Proteomes" id="UP000001261">
    <property type="component" value="Unassembled WGS sequence"/>
</dbReference>
<dbReference type="GO" id="GO:0005737">
    <property type="term" value="C:cytoplasm"/>
    <property type="evidence" value="ECO:0007669"/>
    <property type="project" value="UniProtKB-SubCell"/>
</dbReference>
<dbReference type="GO" id="GO:0005634">
    <property type="term" value="C:nucleus"/>
    <property type="evidence" value="ECO:0007669"/>
    <property type="project" value="UniProtKB-SubCell"/>
</dbReference>
<dbReference type="GO" id="GO:0051604">
    <property type="term" value="P:protein maturation"/>
    <property type="evidence" value="ECO:0000250"/>
    <property type="project" value="UniProtKB"/>
</dbReference>
<dbReference type="InterPro" id="IPR019191">
    <property type="entry name" value="Essential_protein_Yae1_N"/>
</dbReference>
<dbReference type="InterPro" id="IPR038881">
    <property type="entry name" value="Yae1-like"/>
</dbReference>
<dbReference type="PANTHER" id="PTHR18829">
    <property type="entry name" value="PROTEIN YAE1 HOMOLOG"/>
    <property type="match status" value="1"/>
</dbReference>
<dbReference type="PANTHER" id="PTHR18829:SF0">
    <property type="entry name" value="PROTEIN YAE1 HOMOLOG"/>
    <property type="match status" value="1"/>
</dbReference>
<dbReference type="Pfam" id="PF09811">
    <property type="entry name" value="Yae1_N"/>
    <property type="match status" value="1"/>
</dbReference>
<keyword id="KW-0963">Cytoplasm</keyword>
<keyword id="KW-0539">Nucleus</keyword>
<keyword id="KW-1185">Reference proteome</keyword>
<proteinExistence type="inferred from homology"/>
<protein>
    <recommendedName>
        <fullName>Protein YAE1</fullName>
    </recommendedName>
</protein>
<organism>
    <name type="scientific">Coccidioides immitis (strain RS)</name>
    <name type="common">Valley fever fungus</name>
    <dbReference type="NCBI Taxonomy" id="246410"/>
    <lineage>
        <taxon>Eukaryota</taxon>
        <taxon>Fungi</taxon>
        <taxon>Dikarya</taxon>
        <taxon>Ascomycota</taxon>
        <taxon>Pezizomycotina</taxon>
        <taxon>Eurotiomycetes</taxon>
        <taxon>Eurotiomycetidae</taxon>
        <taxon>Onygenales</taxon>
        <taxon>Onygenaceae</taxon>
        <taxon>Coccidioides</taxon>
    </lineage>
</organism>
<reference key="1">
    <citation type="journal article" date="2009" name="Genome Res.">
        <title>Comparative genomic analyses of the human fungal pathogens Coccidioides and their relatives.</title>
        <authorList>
            <person name="Sharpton T.J."/>
            <person name="Stajich J.E."/>
            <person name="Rounsley S.D."/>
            <person name="Gardner M.J."/>
            <person name="Wortman J.R."/>
            <person name="Jordar V.S."/>
            <person name="Maiti R."/>
            <person name="Kodira C.D."/>
            <person name="Neafsey D.E."/>
            <person name="Zeng Q."/>
            <person name="Hung C.-Y."/>
            <person name="McMahan C."/>
            <person name="Muszewska A."/>
            <person name="Grynberg M."/>
            <person name="Mandel M.A."/>
            <person name="Kellner E.M."/>
            <person name="Barker B.M."/>
            <person name="Galgiani J.N."/>
            <person name="Orbach M.J."/>
            <person name="Kirkland T.N."/>
            <person name="Cole G.T."/>
            <person name="Henn M.R."/>
            <person name="Birren B.W."/>
            <person name="Taylor J.W."/>
        </authorList>
    </citation>
    <scope>NUCLEOTIDE SEQUENCE [LARGE SCALE GENOMIC DNA]</scope>
    <source>
        <strain>RS</strain>
    </source>
</reference>
<reference key="2">
    <citation type="journal article" date="2010" name="Genome Res.">
        <title>Population genomic sequencing of Coccidioides fungi reveals recent hybridization and transposon control.</title>
        <authorList>
            <person name="Neafsey D.E."/>
            <person name="Barker B.M."/>
            <person name="Sharpton T.J."/>
            <person name="Stajich J.E."/>
            <person name="Park D.J."/>
            <person name="Whiston E."/>
            <person name="Hung C.-Y."/>
            <person name="McMahan C."/>
            <person name="White J."/>
            <person name="Sykes S."/>
            <person name="Heiman D."/>
            <person name="Young S."/>
            <person name="Zeng Q."/>
            <person name="Abouelleil A."/>
            <person name="Aftuck L."/>
            <person name="Bessette D."/>
            <person name="Brown A."/>
            <person name="FitzGerald M."/>
            <person name="Lui A."/>
            <person name="Macdonald J.P."/>
            <person name="Priest M."/>
            <person name="Orbach M.J."/>
            <person name="Galgiani J.N."/>
            <person name="Kirkland T.N."/>
            <person name="Cole G.T."/>
            <person name="Birren B.W."/>
            <person name="Henn M.R."/>
            <person name="Taylor J.W."/>
            <person name="Rounsley S.D."/>
        </authorList>
    </citation>
    <scope>GENOME REANNOTATION</scope>
    <source>
        <strain>RS</strain>
    </source>
</reference>
<comment type="function">
    <text evidence="2">The complex LTO1:YAE1 may function as a target specific adapter that probably recruits apo-RPLI1 to the cytosolic iron-sulfur protein assembly (CIA) complex machinery. May be required for biogenesis of the large ribosomal subunit and initiation of translation.</text>
</comment>
<comment type="subunit">
    <text evidence="2">May form a complex with LTO1.</text>
</comment>
<comment type="subcellular location">
    <subcellularLocation>
        <location evidence="1">Cytoplasm</location>
    </subcellularLocation>
    <subcellularLocation>
        <location evidence="1">Nucleus</location>
    </subcellularLocation>
</comment>
<comment type="similarity">
    <text evidence="4">Belongs to the YAE1 family.</text>
</comment>
<evidence type="ECO:0000250" key="1">
    <source>
        <dbReference type="UniProtKB" id="P47118"/>
    </source>
</evidence>
<evidence type="ECO:0000250" key="2">
    <source>
        <dbReference type="UniProtKB" id="Q9NRH1"/>
    </source>
</evidence>
<evidence type="ECO:0000256" key="3">
    <source>
        <dbReference type="SAM" id="MobiDB-lite"/>
    </source>
</evidence>
<evidence type="ECO:0000305" key="4"/>
<feature type="chain" id="PRO_0000324425" description="Protein YAE1">
    <location>
        <begin position="1"/>
        <end position="220"/>
    </location>
</feature>
<feature type="region of interest" description="Disordered" evidence="3">
    <location>
        <begin position="1"/>
        <end position="81"/>
    </location>
</feature>
<feature type="region of interest" description="deca-GX3 motif; required for interaction with LTO1" evidence="1">
    <location>
        <begin position="91"/>
        <end position="131"/>
    </location>
</feature>
<feature type="compositionally biased region" description="Polar residues" evidence="3">
    <location>
        <begin position="1"/>
        <end position="11"/>
    </location>
</feature>
<feature type="compositionally biased region" description="Pro residues" evidence="3">
    <location>
        <begin position="33"/>
        <end position="43"/>
    </location>
</feature>
<gene>
    <name type="primary">YAE1</name>
    <name type="ORF">CIMG_07338</name>
</gene>